<comment type="function">
    <text evidence="1">Responsible for the release of ribosomes from messenger RNA at the termination of protein biosynthesis. May increase the efficiency of translation by recycling ribosomes from one round of translation to another.</text>
</comment>
<comment type="subcellular location">
    <subcellularLocation>
        <location evidence="1">Cytoplasm</location>
    </subcellularLocation>
</comment>
<comment type="similarity">
    <text evidence="1">Belongs to the RRF family.</text>
</comment>
<sequence length="184" mass="21079">MSDYLKASEEKMQKSLSVLKNELAAIRAGRANPALLDRIMVDYYGTPTPLNRLATITAPEPRVLVVQPWDVSKISDIEKAIQKSDLGINPVSDGKVLRLVFPELTEERRKELVKLVHKKAEEAKVAVRQIRRDANDAVKKMEKNGEISEDERKKREEEIQKLTDKYIKEIDKVVEAKEKEIMEI</sequence>
<feature type="chain" id="PRO_1000090796" description="Ribosome-recycling factor">
    <location>
        <begin position="1"/>
        <end position="184"/>
    </location>
</feature>
<proteinExistence type="inferred from homology"/>
<organism>
    <name type="scientific">Thermoanaerobacter pseudethanolicus (strain ATCC 33223 / 39E)</name>
    <name type="common">Clostridium thermohydrosulfuricum</name>
    <dbReference type="NCBI Taxonomy" id="340099"/>
    <lineage>
        <taxon>Bacteria</taxon>
        <taxon>Bacillati</taxon>
        <taxon>Bacillota</taxon>
        <taxon>Clostridia</taxon>
        <taxon>Thermoanaerobacterales</taxon>
        <taxon>Thermoanaerobacteraceae</taxon>
        <taxon>Thermoanaerobacter</taxon>
    </lineage>
</organism>
<reference key="1">
    <citation type="submission" date="2008-01" db="EMBL/GenBank/DDBJ databases">
        <title>Complete sequence of Thermoanaerobacter pseudethanolicus 39E.</title>
        <authorList>
            <person name="Copeland A."/>
            <person name="Lucas S."/>
            <person name="Lapidus A."/>
            <person name="Barry K."/>
            <person name="Glavina del Rio T."/>
            <person name="Dalin E."/>
            <person name="Tice H."/>
            <person name="Pitluck S."/>
            <person name="Bruce D."/>
            <person name="Goodwin L."/>
            <person name="Saunders E."/>
            <person name="Brettin T."/>
            <person name="Detter J.C."/>
            <person name="Han C."/>
            <person name="Schmutz J."/>
            <person name="Larimer F."/>
            <person name="Land M."/>
            <person name="Hauser L."/>
            <person name="Kyrpides N."/>
            <person name="Lykidis A."/>
            <person name="Hemme C."/>
            <person name="Fields M.W."/>
            <person name="He Z."/>
            <person name="Zhou J."/>
            <person name="Richardson P."/>
        </authorList>
    </citation>
    <scope>NUCLEOTIDE SEQUENCE [LARGE SCALE GENOMIC DNA]</scope>
    <source>
        <strain>ATCC 33223 / DSM 2355 / 39E</strain>
    </source>
</reference>
<protein>
    <recommendedName>
        <fullName evidence="1">Ribosome-recycling factor</fullName>
        <shortName evidence="1">RRF</shortName>
    </recommendedName>
    <alternativeName>
        <fullName evidence="1">Ribosome-releasing factor</fullName>
    </alternativeName>
</protein>
<gene>
    <name evidence="1" type="primary">frr</name>
    <name type="ordered locus">Teth39_1222</name>
</gene>
<accession>B0K9R3</accession>
<name>RRF_THEP3</name>
<dbReference type="EMBL" id="CP000924">
    <property type="protein sequence ID" value="ABY94876.1"/>
    <property type="molecule type" value="Genomic_DNA"/>
</dbReference>
<dbReference type="RefSeq" id="WP_003866736.1">
    <property type="nucleotide sequence ID" value="NC_010321.1"/>
</dbReference>
<dbReference type="SMR" id="B0K9R3"/>
<dbReference type="STRING" id="340099.Teth39_1222"/>
<dbReference type="KEGG" id="tpd:Teth39_1222"/>
<dbReference type="eggNOG" id="COG0233">
    <property type="taxonomic scope" value="Bacteria"/>
</dbReference>
<dbReference type="HOGENOM" id="CLU_073981_2_0_9"/>
<dbReference type="Proteomes" id="UP000002156">
    <property type="component" value="Chromosome"/>
</dbReference>
<dbReference type="GO" id="GO:0005737">
    <property type="term" value="C:cytoplasm"/>
    <property type="evidence" value="ECO:0007669"/>
    <property type="project" value="UniProtKB-SubCell"/>
</dbReference>
<dbReference type="GO" id="GO:0043023">
    <property type="term" value="F:ribosomal large subunit binding"/>
    <property type="evidence" value="ECO:0007669"/>
    <property type="project" value="TreeGrafter"/>
</dbReference>
<dbReference type="GO" id="GO:0006415">
    <property type="term" value="P:translational termination"/>
    <property type="evidence" value="ECO:0007669"/>
    <property type="project" value="UniProtKB-UniRule"/>
</dbReference>
<dbReference type="CDD" id="cd00520">
    <property type="entry name" value="RRF"/>
    <property type="match status" value="1"/>
</dbReference>
<dbReference type="FunFam" id="1.10.132.20:FF:000001">
    <property type="entry name" value="Ribosome-recycling factor"/>
    <property type="match status" value="1"/>
</dbReference>
<dbReference type="FunFam" id="3.30.1360.40:FF:000001">
    <property type="entry name" value="Ribosome-recycling factor"/>
    <property type="match status" value="1"/>
</dbReference>
<dbReference type="Gene3D" id="3.30.1360.40">
    <property type="match status" value="1"/>
</dbReference>
<dbReference type="Gene3D" id="1.10.132.20">
    <property type="entry name" value="Ribosome-recycling factor"/>
    <property type="match status" value="1"/>
</dbReference>
<dbReference type="HAMAP" id="MF_00040">
    <property type="entry name" value="RRF"/>
    <property type="match status" value="1"/>
</dbReference>
<dbReference type="InterPro" id="IPR002661">
    <property type="entry name" value="Ribosome_recyc_fac"/>
</dbReference>
<dbReference type="InterPro" id="IPR023584">
    <property type="entry name" value="Ribosome_recyc_fac_dom"/>
</dbReference>
<dbReference type="InterPro" id="IPR036191">
    <property type="entry name" value="RRF_sf"/>
</dbReference>
<dbReference type="NCBIfam" id="TIGR00496">
    <property type="entry name" value="frr"/>
    <property type="match status" value="1"/>
</dbReference>
<dbReference type="PANTHER" id="PTHR20982:SF3">
    <property type="entry name" value="MITOCHONDRIAL RIBOSOME RECYCLING FACTOR PSEUDO 1"/>
    <property type="match status" value="1"/>
</dbReference>
<dbReference type="PANTHER" id="PTHR20982">
    <property type="entry name" value="RIBOSOME RECYCLING FACTOR"/>
    <property type="match status" value="1"/>
</dbReference>
<dbReference type="Pfam" id="PF01765">
    <property type="entry name" value="RRF"/>
    <property type="match status" value="1"/>
</dbReference>
<dbReference type="SUPFAM" id="SSF55194">
    <property type="entry name" value="Ribosome recycling factor, RRF"/>
    <property type="match status" value="1"/>
</dbReference>
<keyword id="KW-0963">Cytoplasm</keyword>
<keyword id="KW-0648">Protein biosynthesis</keyword>
<keyword id="KW-1185">Reference proteome</keyword>
<evidence type="ECO:0000255" key="1">
    <source>
        <dbReference type="HAMAP-Rule" id="MF_00040"/>
    </source>
</evidence>